<comment type="function">
    <text evidence="1">Involved in the catabolism of L-rhamnose (6-deoxy-L-mannose). Catalyzes the transfer of the gamma-phosphate group from ATP to the 1-hydroxyl group of L-rhamnulose to yield L-rhamnulose 1-phosphate.</text>
</comment>
<comment type="catalytic activity">
    <reaction evidence="1">
        <text>L-rhamnulose + ATP = L-rhamnulose 1-phosphate + ADP + H(+)</text>
        <dbReference type="Rhea" id="RHEA:20117"/>
        <dbReference type="ChEBI" id="CHEBI:15378"/>
        <dbReference type="ChEBI" id="CHEBI:17897"/>
        <dbReference type="ChEBI" id="CHEBI:30616"/>
        <dbReference type="ChEBI" id="CHEBI:58313"/>
        <dbReference type="ChEBI" id="CHEBI:456216"/>
        <dbReference type="EC" id="2.7.1.5"/>
    </reaction>
</comment>
<comment type="cofactor">
    <cofactor evidence="1">
        <name>Mg(2+)</name>
        <dbReference type="ChEBI" id="CHEBI:18420"/>
    </cofactor>
</comment>
<comment type="pathway">
    <text evidence="1">Carbohydrate degradation; L-rhamnose degradation; glycerone phosphate from L-rhamnose: step 2/3.</text>
</comment>
<comment type="similarity">
    <text evidence="1">Belongs to the rhamnulokinase family.</text>
</comment>
<name>RHAB_LISMO</name>
<feature type="chain" id="PRO_0000090539" description="Rhamnulokinase">
    <location>
        <begin position="1"/>
        <end position="483"/>
    </location>
</feature>
<feature type="active site" description="Proton acceptor" evidence="1">
    <location>
        <position position="235"/>
    </location>
</feature>
<feature type="binding site" evidence="1">
    <location>
        <begin position="11"/>
        <end position="15"/>
    </location>
    <ligand>
        <name>ATP</name>
        <dbReference type="ChEBI" id="CHEBI:30616"/>
    </ligand>
</feature>
<feature type="binding site" evidence="1">
    <location>
        <position position="79"/>
    </location>
    <ligand>
        <name>substrate</name>
    </ligand>
</feature>
<feature type="binding site" evidence="1">
    <location>
        <begin position="234"/>
        <end position="236"/>
    </location>
    <ligand>
        <name>substrate</name>
    </ligand>
</feature>
<feature type="binding site" evidence="1">
    <location>
        <position position="257"/>
    </location>
    <ligand>
        <name>ATP</name>
        <dbReference type="ChEBI" id="CHEBI:30616"/>
    </ligand>
</feature>
<feature type="binding site" evidence="1">
    <location>
        <position position="294"/>
    </location>
    <ligand>
        <name>substrate</name>
    </ligand>
</feature>
<feature type="binding site" evidence="1">
    <location>
        <position position="302"/>
    </location>
    <ligand>
        <name>ATP</name>
        <dbReference type="ChEBI" id="CHEBI:30616"/>
    </ligand>
</feature>
<feature type="binding site" evidence="1">
    <location>
        <position position="401"/>
    </location>
    <ligand>
        <name>ATP</name>
        <dbReference type="ChEBI" id="CHEBI:30616"/>
    </ligand>
</feature>
<feature type="disulfide bond" evidence="1">
    <location>
        <begin position="352"/>
        <end position="369"/>
    </location>
</feature>
<proteinExistence type="inferred from homology"/>
<dbReference type="EC" id="2.7.1.5" evidence="1"/>
<dbReference type="EMBL" id="AL591984">
    <property type="protein sequence ID" value="CAD01062.1"/>
    <property type="molecule type" value="Genomic_DNA"/>
</dbReference>
<dbReference type="PIR" id="AH1430">
    <property type="entry name" value="AH1430"/>
</dbReference>
<dbReference type="RefSeq" id="NP_466371.1">
    <property type="nucleotide sequence ID" value="NC_003210.1"/>
</dbReference>
<dbReference type="RefSeq" id="WP_009924505.1">
    <property type="nucleotide sequence ID" value="NZ_CP149495.1"/>
</dbReference>
<dbReference type="SMR" id="Q8Y3I6"/>
<dbReference type="STRING" id="169963.gene:17595567"/>
<dbReference type="PaxDb" id="169963-lmo2849"/>
<dbReference type="EnsemblBacteria" id="CAD01062">
    <property type="protein sequence ID" value="CAD01062"/>
    <property type="gene ID" value="CAD01062"/>
</dbReference>
<dbReference type="GeneID" id="986385"/>
<dbReference type="KEGG" id="lmo:lmo2849"/>
<dbReference type="PATRIC" id="fig|169963.11.peg.2920"/>
<dbReference type="eggNOG" id="COG1070">
    <property type="taxonomic scope" value="Bacteria"/>
</dbReference>
<dbReference type="HOGENOM" id="CLU_039395_0_1_9"/>
<dbReference type="OrthoDB" id="9761504at2"/>
<dbReference type="PhylomeDB" id="Q8Y3I6"/>
<dbReference type="BioCyc" id="LMON169963:LMO2849-MONOMER"/>
<dbReference type="UniPathway" id="UPA00541">
    <property type="reaction ID" value="UER00602"/>
</dbReference>
<dbReference type="Proteomes" id="UP000000817">
    <property type="component" value="Chromosome"/>
</dbReference>
<dbReference type="GO" id="GO:0005829">
    <property type="term" value="C:cytosol"/>
    <property type="evidence" value="ECO:0000318"/>
    <property type="project" value="GO_Central"/>
</dbReference>
<dbReference type="GO" id="GO:0005524">
    <property type="term" value="F:ATP binding"/>
    <property type="evidence" value="ECO:0007669"/>
    <property type="project" value="UniProtKB-KW"/>
</dbReference>
<dbReference type="GO" id="GO:0004370">
    <property type="term" value="F:glycerol kinase activity"/>
    <property type="evidence" value="ECO:0000318"/>
    <property type="project" value="GO_Central"/>
</dbReference>
<dbReference type="GO" id="GO:0008993">
    <property type="term" value="F:rhamnulokinase activity"/>
    <property type="evidence" value="ECO:0007669"/>
    <property type="project" value="UniProtKB-UniRule"/>
</dbReference>
<dbReference type="GO" id="GO:0019301">
    <property type="term" value="P:rhamnose catabolic process"/>
    <property type="evidence" value="ECO:0000318"/>
    <property type="project" value="GO_Central"/>
</dbReference>
<dbReference type="CDD" id="cd07771">
    <property type="entry name" value="ASKHA_NBD_FGGY_RhaB-like"/>
    <property type="match status" value="1"/>
</dbReference>
<dbReference type="FunFam" id="3.30.420.40:FF:000064">
    <property type="entry name" value="Rhamnulokinase"/>
    <property type="match status" value="1"/>
</dbReference>
<dbReference type="Gene3D" id="3.30.420.40">
    <property type="match status" value="2"/>
</dbReference>
<dbReference type="HAMAP" id="MF_01535">
    <property type="entry name" value="Rhamnulokinase"/>
    <property type="match status" value="1"/>
</dbReference>
<dbReference type="InterPro" id="IPR043129">
    <property type="entry name" value="ATPase_NBD"/>
</dbReference>
<dbReference type="InterPro" id="IPR018485">
    <property type="entry name" value="FGGY_C"/>
</dbReference>
<dbReference type="InterPro" id="IPR018484">
    <property type="entry name" value="FGGY_N"/>
</dbReference>
<dbReference type="InterPro" id="IPR013449">
    <property type="entry name" value="Rhamnulokinase"/>
</dbReference>
<dbReference type="NCBIfam" id="TIGR02627">
    <property type="entry name" value="rhamnulo_kin"/>
    <property type="match status" value="1"/>
</dbReference>
<dbReference type="PANTHER" id="PTHR10196:SF93">
    <property type="entry name" value="L-RHAMNULOKINASE"/>
    <property type="match status" value="1"/>
</dbReference>
<dbReference type="PANTHER" id="PTHR10196">
    <property type="entry name" value="SUGAR KINASE"/>
    <property type="match status" value="1"/>
</dbReference>
<dbReference type="Pfam" id="PF02782">
    <property type="entry name" value="FGGY_C"/>
    <property type="match status" value="1"/>
</dbReference>
<dbReference type="Pfam" id="PF00370">
    <property type="entry name" value="FGGY_N"/>
    <property type="match status" value="1"/>
</dbReference>
<dbReference type="SUPFAM" id="SSF53067">
    <property type="entry name" value="Actin-like ATPase domain"/>
    <property type="match status" value="2"/>
</dbReference>
<accession>Q8Y3I6</accession>
<sequence>MKHYVAVDIGASSGRLILGKLVNEKLQLEEIHRFKNGFTYRDGHERWEIDQLMQEIFIGLEKVKQLGISECVLGIDTWGVDYVLIGASGEKLADPISYRDKRTLNAVQNLTSEYPREYIYKKTGIQFMELNTLYQLYVEERDLLERAEKILLIPDYIGYVLTGVKVAETTNSSTTQMLNLREQLFDKDLLSHLNIDVEKFAPLTDAGTYLGEVKEDWLKMYDIPNCDVVTVATHDTASAVVGTPAEGENWAFLSSGTWSLIGMELSAPINNEVAFKENYTNEWGAYGTYRFLKNIMGLWIVQEIARMDDYKHSFAEMAEEAGNYPYFKQIINVNDARFNNPENMVDEIRLYCRETGQTVPETIGELTNCVYGSLALYYALELEKMTEITGKKIEKLYIVGGGSNVAMLNQLTAKLAGIEVFAGPSEATAIGNLVVQMINQGEIESMRAGRKIIRNSFEIGEFSCGDVRFEEIKERFTKVLEFN</sequence>
<gene>
    <name evidence="1" type="primary">rhaB</name>
    <name type="ordered locus">lmo2849</name>
</gene>
<organism>
    <name type="scientific">Listeria monocytogenes serovar 1/2a (strain ATCC BAA-679 / EGD-e)</name>
    <dbReference type="NCBI Taxonomy" id="169963"/>
    <lineage>
        <taxon>Bacteria</taxon>
        <taxon>Bacillati</taxon>
        <taxon>Bacillota</taxon>
        <taxon>Bacilli</taxon>
        <taxon>Bacillales</taxon>
        <taxon>Listeriaceae</taxon>
        <taxon>Listeria</taxon>
    </lineage>
</organism>
<protein>
    <recommendedName>
        <fullName evidence="1">Rhamnulokinase</fullName>
        <shortName evidence="1">RhaB</shortName>
        <ecNumber evidence="1">2.7.1.5</ecNumber>
    </recommendedName>
    <alternativeName>
        <fullName evidence="1">ATP:L-rhamnulose phosphotransferase</fullName>
    </alternativeName>
    <alternativeName>
        <fullName evidence="1">L-rhamnulose 1-kinase</fullName>
    </alternativeName>
    <alternativeName>
        <fullName evidence="1">Rhamnulose kinase</fullName>
    </alternativeName>
</protein>
<evidence type="ECO:0000255" key="1">
    <source>
        <dbReference type="HAMAP-Rule" id="MF_01535"/>
    </source>
</evidence>
<keyword id="KW-0067">ATP-binding</keyword>
<keyword id="KW-1015">Disulfide bond</keyword>
<keyword id="KW-0418">Kinase</keyword>
<keyword id="KW-0547">Nucleotide-binding</keyword>
<keyword id="KW-1185">Reference proteome</keyword>
<keyword id="KW-0684">Rhamnose metabolism</keyword>
<keyword id="KW-0808">Transferase</keyword>
<reference key="1">
    <citation type="journal article" date="2001" name="Science">
        <title>Comparative genomics of Listeria species.</title>
        <authorList>
            <person name="Glaser P."/>
            <person name="Frangeul L."/>
            <person name="Buchrieser C."/>
            <person name="Rusniok C."/>
            <person name="Amend A."/>
            <person name="Baquero F."/>
            <person name="Berche P."/>
            <person name="Bloecker H."/>
            <person name="Brandt P."/>
            <person name="Chakraborty T."/>
            <person name="Charbit A."/>
            <person name="Chetouani F."/>
            <person name="Couve E."/>
            <person name="de Daruvar A."/>
            <person name="Dehoux P."/>
            <person name="Domann E."/>
            <person name="Dominguez-Bernal G."/>
            <person name="Duchaud E."/>
            <person name="Durant L."/>
            <person name="Dussurget O."/>
            <person name="Entian K.-D."/>
            <person name="Fsihi H."/>
            <person name="Garcia-del Portillo F."/>
            <person name="Garrido P."/>
            <person name="Gautier L."/>
            <person name="Goebel W."/>
            <person name="Gomez-Lopez N."/>
            <person name="Hain T."/>
            <person name="Hauf J."/>
            <person name="Jackson D."/>
            <person name="Jones L.-M."/>
            <person name="Kaerst U."/>
            <person name="Kreft J."/>
            <person name="Kuhn M."/>
            <person name="Kunst F."/>
            <person name="Kurapkat G."/>
            <person name="Madueno E."/>
            <person name="Maitournam A."/>
            <person name="Mata Vicente J."/>
            <person name="Ng E."/>
            <person name="Nedjari H."/>
            <person name="Nordsiek G."/>
            <person name="Novella S."/>
            <person name="de Pablos B."/>
            <person name="Perez-Diaz J.-C."/>
            <person name="Purcell R."/>
            <person name="Remmel B."/>
            <person name="Rose M."/>
            <person name="Schlueter T."/>
            <person name="Simoes N."/>
            <person name="Tierrez A."/>
            <person name="Vazquez-Boland J.-A."/>
            <person name="Voss H."/>
            <person name="Wehland J."/>
            <person name="Cossart P."/>
        </authorList>
    </citation>
    <scope>NUCLEOTIDE SEQUENCE [LARGE SCALE GENOMIC DNA]</scope>
    <source>
        <strain>ATCC BAA-679 / EGD-e</strain>
    </source>
</reference>